<accession>P11303</accession>
<proteinExistence type="inferred from homology"/>
<organismHost>
    <name type="scientific">Bos taurus</name>
    <name type="common">Bovine</name>
    <dbReference type="NCBI Taxonomy" id="9913"/>
</organismHost>
<organism>
    <name type="scientific">Bos taurus papillomavirus 2</name>
    <name type="common">Bovine papillomavirus 2</name>
    <dbReference type="NCBI Taxonomy" id="2758382"/>
    <lineage>
        <taxon>Viruses</taxon>
        <taxon>Monodnaviria</taxon>
        <taxon>Shotokuvirae</taxon>
        <taxon>Cossaviricota</taxon>
        <taxon>Papovaviricetes</taxon>
        <taxon>Zurhausenvirales</taxon>
        <taxon>Papillomaviridae</taxon>
        <taxon>Firstpapillomavirinae</taxon>
        <taxon>Deltapapillomavirus</taxon>
        <taxon>Bovine papillomavirus type 1</taxon>
    </lineage>
</organism>
<comment type="function">
    <text evidence="1">Plays a role in viral genome replication by driving entry of quiescent cells into the cell cycle. Stimulation of progression from G1 to S phase allows the virus to efficiently use the cellular DNA replicating machinery to achieve viral genome replication. E7 protein has both transforming and trans-activating activities. Induces the disassembly of the E2F1 transcription factor from RB1, with subsequent transcriptional activation of E2F1-regulated S-phase genes. Interferes with host histone deacetylation mediated by HDAC1 and HDAC2, leading to transcription activation. Also plays a role in the inhibition of both antiviral and antiproliferative functions of host interferon alpha. Interaction with host TMEM173/STING impairs the ability of TMEM173/STING to sense cytosolic DNA and promote the production of type I interferon (IFN-alpha and IFN-beta).</text>
</comment>
<comment type="subunit">
    <text evidence="1">Homodimer. Homooligomer. Interacts with host RB1; this interaction induces dissociation of RB1-E2F1 complex thereby disrupting RB1 activity. Interacts with host EP300; this interaction represses EP300 transcriptional activity. Interacts with protein E2; this interaction inhibits E7 oncogenic activity. Interacts with host TMEM173/STING; this interaction impairs the ability of TMEM173/STING to sense cytosolic DNA and promote the production of type I interferon (IFN-alpha and IFN-beta).</text>
</comment>
<comment type="subcellular location">
    <subcellularLocation>
        <location evidence="1">Host cytoplasm</location>
    </subcellularLocation>
    <subcellularLocation>
        <location evidence="1">Host nucleus</location>
    </subcellularLocation>
    <text evidence="1">Predominantly found in the host nucleus.</text>
</comment>
<comment type="domain">
    <text evidence="1">The E7 terminal domain is an intrinsically disordered domain, whose flexibility and conformational transitions confer target adaptability to the oncoprotein. It allows adaptation to a variety of protein targets and exposes the PEST degradation sequence that regulates its turnover in the cell.</text>
</comment>
<comment type="PTM">
    <text evidence="1">Highly phosphorylated.</text>
</comment>
<comment type="similarity">
    <text evidence="1">Belongs to the papillomaviridae E7 protein family.</text>
</comment>
<dbReference type="EMBL" id="M20219">
    <property type="protein sequence ID" value="AAA66832.1"/>
    <property type="molecule type" value="Genomic_DNA"/>
</dbReference>
<dbReference type="PIR" id="I31169">
    <property type="entry name" value="W7WLB2"/>
</dbReference>
<dbReference type="SMR" id="P11303"/>
<dbReference type="Proteomes" id="UP000007612">
    <property type="component" value="Segment"/>
</dbReference>
<dbReference type="GO" id="GO:0030430">
    <property type="term" value="C:host cell cytoplasm"/>
    <property type="evidence" value="ECO:0007669"/>
    <property type="project" value="UniProtKB-SubCell"/>
</dbReference>
<dbReference type="GO" id="GO:0042025">
    <property type="term" value="C:host cell nucleus"/>
    <property type="evidence" value="ECO:0007669"/>
    <property type="project" value="UniProtKB-SubCell"/>
</dbReference>
<dbReference type="GO" id="GO:0003677">
    <property type="term" value="F:DNA binding"/>
    <property type="evidence" value="ECO:0007669"/>
    <property type="project" value="UniProtKB-UniRule"/>
</dbReference>
<dbReference type="GO" id="GO:0003700">
    <property type="term" value="F:DNA-binding transcription factor activity"/>
    <property type="evidence" value="ECO:0007669"/>
    <property type="project" value="UniProtKB-UniRule"/>
</dbReference>
<dbReference type="GO" id="GO:0019904">
    <property type="term" value="F:protein domain specific binding"/>
    <property type="evidence" value="ECO:0007669"/>
    <property type="project" value="UniProtKB-UniRule"/>
</dbReference>
<dbReference type="GO" id="GO:0008270">
    <property type="term" value="F:zinc ion binding"/>
    <property type="evidence" value="ECO:0007669"/>
    <property type="project" value="UniProtKB-KW"/>
</dbReference>
<dbReference type="GO" id="GO:0006351">
    <property type="term" value="P:DNA-templated transcription"/>
    <property type="evidence" value="ECO:0007669"/>
    <property type="project" value="UniProtKB-UniRule"/>
</dbReference>
<dbReference type="GO" id="GO:0039645">
    <property type="term" value="P:symbiont-mediated perturbation of host cell cycle G1/S transition checkpoint"/>
    <property type="evidence" value="ECO:0007669"/>
    <property type="project" value="UniProtKB-UniRule"/>
</dbReference>
<dbReference type="GO" id="GO:0052170">
    <property type="term" value="P:symbiont-mediated suppression of host innate immune response"/>
    <property type="evidence" value="ECO:0007669"/>
    <property type="project" value="UniProtKB-KW"/>
</dbReference>
<dbReference type="GO" id="GO:0039502">
    <property type="term" value="P:symbiont-mediated suppression of host type I interferon-mediated signaling pathway"/>
    <property type="evidence" value="ECO:0007669"/>
    <property type="project" value="UniProtKB-UniRule"/>
</dbReference>
<dbReference type="Gene3D" id="3.30.160.330">
    <property type="match status" value="1"/>
</dbReference>
<dbReference type="HAMAP" id="MF_04004">
    <property type="entry name" value="PPV_E7"/>
    <property type="match status" value="1"/>
</dbReference>
<dbReference type="InterPro" id="IPR000148">
    <property type="entry name" value="Papilloma_E7"/>
</dbReference>
<dbReference type="Pfam" id="PF00527">
    <property type="entry name" value="E7"/>
    <property type="match status" value="1"/>
</dbReference>
<dbReference type="SUPFAM" id="SSF161234">
    <property type="entry name" value="E7 C-terminal domain-like"/>
    <property type="match status" value="1"/>
</dbReference>
<evidence type="ECO:0000255" key="1">
    <source>
        <dbReference type="HAMAP-Rule" id="MF_04004"/>
    </source>
</evidence>
<evidence type="ECO:0000256" key="2">
    <source>
        <dbReference type="SAM" id="MobiDB-lite"/>
    </source>
</evidence>
<gene>
    <name evidence="1" type="primary">E7</name>
</gene>
<reference key="1">
    <citation type="submission" date="1988-05" db="EMBL/GenBank/DDBJ databases">
        <authorList>
            <person name="Groff D.E."/>
            <person name="Mitra R."/>
            <person name="Lancaster W.D."/>
        </authorList>
    </citation>
    <scope>NUCLEOTIDE SEQUENCE [GENOMIC DNA]</scope>
</reference>
<feature type="chain" id="PRO_0000133393" description="Protein E7">
    <location>
        <begin position="1"/>
        <end position="127"/>
    </location>
</feature>
<feature type="zinc finger region" evidence="1">
    <location>
        <begin position="82"/>
        <end position="118"/>
    </location>
</feature>
<feature type="region of interest" description="E7 terminal domain" evidence="1">
    <location>
        <begin position="2"/>
        <end position="56"/>
    </location>
</feature>
<feature type="region of interest" description="Disordered" evidence="2">
    <location>
        <begin position="33"/>
        <end position="66"/>
    </location>
</feature>
<feature type="short sequence motif" description="Nuclear export signal" evidence="1">
    <location>
        <begin position="100"/>
        <end position="108"/>
    </location>
</feature>
<sequence length="127" mass="13601">MVQGPTTHRNLDDSPAGPLLILSPCAGTPTRVPAAPDAPDFRLPCHFGRPTRKRGPSTPPLSSPGKVCATGPRRVYSVTVCCGHCGKDLTFAVKTGSTTLLGFEHLLNSDLDLLCPRCESRERHGKR</sequence>
<keyword id="KW-0010">Activator</keyword>
<keyword id="KW-0238">DNA-binding</keyword>
<keyword id="KW-0244">Early protein</keyword>
<keyword id="KW-1078">G1/S host cell cycle checkpoint dysregulation by virus</keyword>
<keyword id="KW-1035">Host cytoplasm</keyword>
<keyword id="KW-1048">Host nucleus</keyword>
<keyword id="KW-0945">Host-virus interaction</keyword>
<keyword id="KW-1090">Inhibition of host innate immune response by virus</keyword>
<keyword id="KW-1114">Inhibition of host interferon signaling pathway by virus</keyword>
<keyword id="KW-0922">Interferon antiviral system evasion</keyword>
<keyword id="KW-0479">Metal-binding</keyword>
<keyword id="KW-1121">Modulation of host cell cycle by virus</keyword>
<keyword id="KW-0553">Oncogene</keyword>
<keyword id="KW-0804">Transcription</keyword>
<keyword id="KW-0805">Transcription regulation</keyword>
<keyword id="KW-0899">Viral immunoevasion</keyword>
<keyword id="KW-0862">Zinc</keyword>
<keyword id="KW-0863">Zinc-finger</keyword>
<name>VE7_BPV2</name>
<protein>
    <recommendedName>
        <fullName evidence="1">Protein E7</fullName>
    </recommendedName>
</protein>